<evidence type="ECO:0000250" key="1">
    <source>
        <dbReference type="UniProtKB" id="Q38882"/>
    </source>
</evidence>
<evidence type="ECO:0000255" key="2">
    <source>
        <dbReference type="PROSITE-ProRule" id="PRU00041"/>
    </source>
</evidence>
<evidence type="ECO:0000255" key="3">
    <source>
        <dbReference type="PROSITE-ProRule" id="PRU00153"/>
    </source>
</evidence>
<evidence type="ECO:0000305" key="4"/>
<evidence type="ECO:0000312" key="5">
    <source>
        <dbReference type="EMBL" id="BAF04067.1"/>
    </source>
</evidence>
<evidence type="ECO:0000312" key="6">
    <source>
        <dbReference type="EMBL" id="EEE53959.1"/>
    </source>
</evidence>
<comment type="function">
    <text>Hydrolyzes glycerol-phospholipids at the terminal phosphodiesteric bond. Plays an important role in various cellular processes.</text>
</comment>
<comment type="catalytic activity">
    <reaction>
        <text>a 1,2-diacyl-sn-glycero-3-phosphocholine + H2O = a 1,2-diacyl-sn-glycero-3-phosphate + choline + H(+)</text>
        <dbReference type="Rhea" id="RHEA:14445"/>
        <dbReference type="ChEBI" id="CHEBI:15354"/>
        <dbReference type="ChEBI" id="CHEBI:15377"/>
        <dbReference type="ChEBI" id="CHEBI:15378"/>
        <dbReference type="ChEBI" id="CHEBI:57643"/>
        <dbReference type="ChEBI" id="CHEBI:58608"/>
        <dbReference type="EC" id="3.1.4.4"/>
    </reaction>
</comment>
<comment type="cofactor">
    <cofactor>
        <name>Ca(2+)</name>
        <dbReference type="ChEBI" id="CHEBI:29108"/>
    </cofactor>
</comment>
<comment type="biophysicochemical properties">
    <phDependence>
        <text>Optimum pH is 6.0.</text>
    </phDependence>
    <temperatureDependence>
        <text>Stable from 4 to 37 degrees Celsius. Activity is reduced to one third of the original level after incubation at 50 degrees Celsius for 30 minutes.</text>
    </temperatureDependence>
</comment>
<comment type="subunit">
    <text>Monomer.</text>
</comment>
<comment type="tissue specificity">
    <text>Expressed in leaves, roots, developing seeds and cultured cells.</text>
</comment>
<comment type="developmental stage">
    <text>The transcript begins to emerged in seeds as early as the second day after imbibition and increased after radicle emergence on the third day. Strongly expressed in the leaves, roots and residual grain of seedling eight days after imbibition. Undetectable in mature dry seeds.</text>
</comment>
<comment type="domain">
    <text>C2 domain is a calcium-binding fold, and the binding promotes the protein association with membranes. A lower affinity toward calcium can be anticipated for PLD alpha due to the absence of two potential calcium ligands.</text>
</comment>
<comment type="similarity">
    <text evidence="4">Belongs to the phospholipase D family. C2-PLD subfamily.</text>
</comment>
<reference key="1">
    <citation type="journal article" date="1995" name="Plant Cell Physiol.">
        <title>Purification and characterization of phospholipase D (PLD) from rice (Oryza sativa L.) and cloning of cDNA for PLD from rice and maize (Zea mays L.).</title>
        <authorList>
            <person name="Ueki J."/>
            <person name="Morioka S."/>
            <person name="Komari T."/>
            <person name="Kumashiro T."/>
        </authorList>
    </citation>
    <scope>NUCLEOTIDE SEQUENCE [MRNA]</scope>
    <scope>PARTIAL PROTEIN SEQUENCE</scope>
    <source>
        <strain>cv. Koshihikari</strain>
    </source>
</reference>
<reference key="2">
    <citation type="online journal article" date="1997" name="Plant Gene Register">
        <title>Characterization of two Distinctive genomic clones for phospholipase D from rice.</title>
        <authorList>
            <person name="Morioka S."/>
            <person name="Ueki J."/>
            <person name="Komari T."/>
        </authorList>
        <locator>PGR97-076</locator>
    </citation>
    <scope>NUCLEOTIDE SEQUENCE [GENOMIC DNA]</scope>
    <source>
        <strain>cv. Koshihikari</strain>
        <tissue>Leaf</tissue>
    </source>
</reference>
<reference key="3">
    <citation type="journal article" date="2002" name="Nature">
        <title>The genome sequence and structure of rice chromosome 1.</title>
        <authorList>
            <person name="Sasaki T."/>
            <person name="Matsumoto T."/>
            <person name="Yamamoto K."/>
            <person name="Sakata K."/>
            <person name="Baba T."/>
            <person name="Katayose Y."/>
            <person name="Wu J."/>
            <person name="Niimura Y."/>
            <person name="Cheng Z."/>
            <person name="Nagamura Y."/>
            <person name="Antonio B.A."/>
            <person name="Kanamori H."/>
            <person name="Hosokawa S."/>
            <person name="Masukawa M."/>
            <person name="Arikawa K."/>
            <person name="Chiden Y."/>
            <person name="Hayashi M."/>
            <person name="Okamoto M."/>
            <person name="Ando T."/>
            <person name="Aoki H."/>
            <person name="Arita K."/>
            <person name="Hamada M."/>
            <person name="Harada C."/>
            <person name="Hijishita S."/>
            <person name="Honda M."/>
            <person name="Ichikawa Y."/>
            <person name="Idonuma A."/>
            <person name="Iijima M."/>
            <person name="Ikeda M."/>
            <person name="Ikeno M."/>
            <person name="Ito S."/>
            <person name="Ito T."/>
            <person name="Ito Y."/>
            <person name="Ito Y."/>
            <person name="Iwabuchi A."/>
            <person name="Kamiya K."/>
            <person name="Karasawa W."/>
            <person name="Katagiri S."/>
            <person name="Kikuta A."/>
            <person name="Kobayashi N."/>
            <person name="Kono I."/>
            <person name="Machita K."/>
            <person name="Maehara T."/>
            <person name="Mizuno H."/>
            <person name="Mizubayashi T."/>
            <person name="Mukai Y."/>
            <person name="Nagasaki H."/>
            <person name="Nakashima M."/>
            <person name="Nakama Y."/>
            <person name="Nakamichi Y."/>
            <person name="Nakamura M."/>
            <person name="Namiki N."/>
            <person name="Negishi M."/>
            <person name="Ohta I."/>
            <person name="Ono N."/>
            <person name="Saji S."/>
            <person name="Sakai K."/>
            <person name="Shibata M."/>
            <person name="Shimokawa T."/>
            <person name="Shomura A."/>
            <person name="Song J."/>
            <person name="Takazaki Y."/>
            <person name="Terasawa K."/>
            <person name="Tsuji K."/>
            <person name="Waki K."/>
            <person name="Yamagata H."/>
            <person name="Yamane H."/>
            <person name="Yoshiki S."/>
            <person name="Yoshihara R."/>
            <person name="Yukawa K."/>
            <person name="Zhong H."/>
            <person name="Iwama H."/>
            <person name="Endo T."/>
            <person name="Ito H."/>
            <person name="Hahn J.H."/>
            <person name="Kim H.-I."/>
            <person name="Eun M.-Y."/>
            <person name="Yano M."/>
            <person name="Jiang J."/>
            <person name="Gojobori T."/>
        </authorList>
    </citation>
    <scope>NUCLEOTIDE SEQUENCE [LARGE SCALE GENOMIC DNA]</scope>
    <source>
        <strain>cv. Nipponbare</strain>
    </source>
</reference>
<reference key="4">
    <citation type="journal article" date="2005" name="Nature">
        <title>The map-based sequence of the rice genome.</title>
        <authorList>
            <consortium name="International rice genome sequencing project (IRGSP)"/>
        </authorList>
    </citation>
    <scope>NUCLEOTIDE SEQUENCE [LARGE SCALE GENOMIC DNA]</scope>
    <source>
        <strain>cv. Nipponbare</strain>
    </source>
</reference>
<reference key="5">
    <citation type="journal article" date="2008" name="Nucleic Acids Res.">
        <title>The rice annotation project database (RAP-DB): 2008 update.</title>
        <authorList>
            <consortium name="The rice annotation project (RAP)"/>
        </authorList>
    </citation>
    <scope>GENOME REANNOTATION</scope>
    <source>
        <strain>cv. Nipponbare</strain>
    </source>
</reference>
<reference key="6">
    <citation type="journal article" date="2013" name="Rice">
        <title>Improvement of the Oryza sativa Nipponbare reference genome using next generation sequence and optical map data.</title>
        <authorList>
            <person name="Kawahara Y."/>
            <person name="de la Bastide M."/>
            <person name="Hamilton J.P."/>
            <person name="Kanamori H."/>
            <person name="McCombie W.R."/>
            <person name="Ouyang S."/>
            <person name="Schwartz D.C."/>
            <person name="Tanaka T."/>
            <person name="Wu J."/>
            <person name="Zhou S."/>
            <person name="Childs K.L."/>
            <person name="Davidson R.M."/>
            <person name="Lin H."/>
            <person name="Quesada-Ocampo L."/>
            <person name="Vaillancourt B."/>
            <person name="Sakai H."/>
            <person name="Lee S.S."/>
            <person name="Kim J."/>
            <person name="Numa H."/>
            <person name="Itoh T."/>
            <person name="Buell C.R."/>
            <person name="Matsumoto T."/>
        </authorList>
    </citation>
    <scope>GENOME REANNOTATION</scope>
    <source>
        <strain>cv. Nipponbare</strain>
    </source>
</reference>
<reference key="7">
    <citation type="journal article" date="2005" name="PLoS Biol.">
        <title>The genomes of Oryza sativa: a history of duplications.</title>
        <authorList>
            <person name="Yu J."/>
            <person name="Wang J."/>
            <person name="Lin W."/>
            <person name="Li S."/>
            <person name="Li H."/>
            <person name="Zhou J."/>
            <person name="Ni P."/>
            <person name="Dong W."/>
            <person name="Hu S."/>
            <person name="Zeng C."/>
            <person name="Zhang J."/>
            <person name="Zhang Y."/>
            <person name="Li R."/>
            <person name="Xu Z."/>
            <person name="Li S."/>
            <person name="Li X."/>
            <person name="Zheng H."/>
            <person name="Cong L."/>
            <person name="Lin L."/>
            <person name="Yin J."/>
            <person name="Geng J."/>
            <person name="Li G."/>
            <person name="Shi J."/>
            <person name="Liu J."/>
            <person name="Lv H."/>
            <person name="Li J."/>
            <person name="Wang J."/>
            <person name="Deng Y."/>
            <person name="Ran L."/>
            <person name="Shi X."/>
            <person name="Wang X."/>
            <person name="Wu Q."/>
            <person name="Li C."/>
            <person name="Ren X."/>
            <person name="Wang J."/>
            <person name="Wang X."/>
            <person name="Li D."/>
            <person name="Liu D."/>
            <person name="Zhang X."/>
            <person name="Ji Z."/>
            <person name="Zhao W."/>
            <person name="Sun Y."/>
            <person name="Zhang Z."/>
            <person name="Bao J."/>
            <person name="Han Y."/>
            <person name="Dong L."/>
            <person name="Ji J."/>
            <person name="Chen P."/>
            <person name="Wu S."/>
            <person name="Liu J."/>
            <person name="Xiao Y."/>
            <person name="Bu D."/>
            <person name="Tan J."/>
            <person name="Yang L."/>
            <person name="Ye C."/>
            <person name="Zhang J."/>
            <person name="Xu J."/>
            <person name="Zhou Y."/>
            <person name="Yu Y."/>
            <person name="Zhang B."/>
            <person name="Zhuang S."/>
            <person name="Wei H."/>
            <person name="Liu B."/>
            <person name="Lei M."/>
            <person name="Yu H."/>
            <person name="Li Y."/>
            <person name="Xu H."/>
            <person name="Wei S."/>
            <person name="He X."/>
            <person name="Fang L."/>
            <person name="Zhang Z."/>
            <person name="Zhang Y."/>
            <person name="Huang X."/>
            <person name="Su Z."/>
            <person name="Tong W."/>
            <person name="Li J."/>
            <person name="Tong Z."/>
            <person name="Li S."/>
            <person name="Ye J."/>
            <person name="Wang L."/>
            <person name="Fang L."/>
            <person name="Lei T."/>
            <person name="Chen C.-S."/>
            <person name="Chen H.-C."/>
            <person name="Xu Z."/>
            <person name="Li H."/>
            <person name="Huang H."/>
            <person name="Zhang F."/>
            <person name="Xu H."/>
            <person name="Li N."/>
            <person name="Zhao C."/>
            <person name="Li S."/>
            <person name="Dong L."/>
            <person name="Huang Y."/>
            <person name="Li L."/>
            <person name="Xi Y."/>
            <person name="Qi Q."/>
            <person name="Li W."/>
            <person name="Zhang B."/>
            <person name="Hu W."/>
            <person name="Zhang Y."/>
            <person name="Tian X."/>
            <person name="Jiao Y."/>
            <person name="Liang X."/>
            <person name="Jin J."/>
            <person name="Gao L."/>
            <person name="Zheng W."/>
            <person name="Hao B."/>
            <person name="Liu S.-M."/>
            <person name="Wang W."/>
            <person name="Yuan L."/>
            <person name="Cao M."/>
            <person name="McDermott J."/>
            <person name="Samudrala R."/>
            <person name="Wang J."/>
            <person name="Wong G.K.-S."/>
            <person name="Yang H."/>
        </authorList>
    </citation>
    <scope>NUCLEOTIDE SEQUENCE [LARGE SCALE GENOMIC DNA]</scope>
    <source>
        <strain>cv. Nipponbare</strain>
    </source>
</reference>
<sequence>MAQMLLHGTLHATIFEAASLSNPHRASGSAPKFIRKFVEGIEDTVGVGKGATKVYSTIDLEKARVGRTRMITNEPINPRWYESFHIYCAHMASNVIFTVKIDNPIGATNIGRAYLPVQELLNGEEIDRWLDICDNNREPVGESKIHVKLQYFDVSKDRNWARGVRSTKYPGVPYTFFSQRQGCKVTLYQDAHVPDNFIPKIPLADGKNYEPHRCWEDIFDAISNAQHLIYITGWSVYTEITLVRDSNRPKPGGDVTLGELLKKKASEGVRVLMLVWDDRTSVGLLKRDGLMATHDEETENYFHGSDVNCVLCPRNPDDSGSIVQDLSISTMFTHHQKIVVVDHELPNQGSQQRRIVSFVGGLDLCDGRYDTQYHSLFRTLDSTHHDDFHQPNFATASIKKGGPREPWHDIHSRLEGPIAWDVLYNFEQRWRKQGGKDLLLQLRDLSDTIIPPSPVMFPEDRETWNVQLFRSIDGGAAFGFPDTPEEAAKAGLVSGKDQIIDRSIQDAYIHAIRRAKNFIYIENQYFLGSSYAWKPEGIKPEDIGALHLIPKELALKVVSKIEAGERFTVYVVVPMWPEGVPESGSVQAILDWQRRTMEMMYTDITEALQAKGIEANPKDYLTFFCLGNREVKQAGEYQPEEQPEADTDYSRAQEARRFMIYVHTKMMIVDDEYIIIGSANINQRSMDGARDSEIAMGGYQPYHLATRQPARGQIHGFRMALWYEHLGMLDDVFQRPESLECVQKVNRIAEKYWDMYSSDDLQQDLPGHLLSYPIGVASDGVVTELPGMEYFPDTRARVLGAKSDYMPPILTS</sequence>
<gene>
    <name type="primary">PLD1</name>
    <name evidence="5" type="ordered locus">Os01g0172400</name>
    <name evidence="4" type="ordered locus">LOC_Os01g07760</name>
    <name evidence="6" type="ORF">OsJ_00559</name>
</gene>
<keyword id="KW-0106">Calcium</keyword>
<keyword id="KW-0903">Direct protein sequencing</keyword>
<keyword id="KW-0378">Hydrolase</keyword>
<keyword id="KW-0442">Lipid degradation</keyword>
<keyword id="KW-0443">Lipid metabolism</keyword>
<keyword id="KW-0479">Metal-binding</keyword>
<keyword id="KW-1185">Reference proteome</keyword>
<keyword id="KW-0677">Repeat</keyword>
<organism>
    <name type="scientific">Oryza sativa subsp. japonica</name>
    <name type="common">Rice</name>
    <dbReference type="NCBI Taxonomy" id="39947"/>
    <lineage>
        <taxon>Eukaryota</taxon>
        <taxon>Viridiplantae</taxon>
        <taxon>Streptophyta</taxon>
        <taxon>Embryophyta</taxon>
        <taxon>Tracheophyta</taxon>
        <taxon>Spermatophyta</taxon>
        <taxon>Magnoliopsida</taxon>
        <taxon>Liliopsida</taxon>
        <taxon>Poales</taxon>
        <taxon>Poaceae</taxon>
        <taxon>BOP clade</taxon>
        <taxon>Oryzoideae</taxon>
        <taxon>Oryzeae</taxon>
        <taxon>Oryzinae</taxon>
        <taxon>Oryza</taxon>
        <taxon>Oryza sativa</taxon>
    </lineage>
</organism>
<feature type="propeptide" id="PRO_0000024655">
    <location>
        <begin position="1"/>
        <end position="46"/>
    </location>
</feature>
<feature type="chain" id="PRO_0000024656" description="Phospholipase D alpha 1">
    <location>
        <begin position="47"/>
        <end position="812"/>
    </location>
</feature>
<feature type="domain" description="C2" evidence="2">
    <location>
        <begin position="1"/>
        <end position="130"/>
    </location>
</feature>
<feature type="domain" description="PLD phosphodiesterase 1" evidence="3">
    <location>
        <begin position="330"/>
        <end position="368"/>
    </location>
</feature>
<feature type="domain" description="PLD phosphodiesterase 2" evidence="3">
    <location>
        <begin position="658"/>
        <end position="685"/>
    </location>
</feature>
<feature type="active site" evidence="3">
    <location>
        <position position="335"/>
    </location>
</feature>
<feature type="active site" evidence="3">
    <location>
        <position position="337"/>
    </location>
</feature>
<feature type="active site" evidence="3">
    <location>
        <position position="342"/>
    </location>
</feature>
<feature type="active site" evidence="3">
    <location>
        <position position="663"/>
    </location>
</feature>
<feature type="active site" evidence="3">
    <location>
        <position position="665"/>
    </location>
</feature>
<feature type="active site" evidence="3">
    <location>
        <position position="670"/>
    </location>
</feature>
<feature type="binding site" evidence="1">
    <location>
        <position position="190"/>
    </location>
    <ligand>
        <name>Ca(2+)</name>
        <dbReference type="ChEBI" id="CHEBI:29108"/>
    </ligand>
</feature>
<feature type="binding site" evidence="1">
    <location>
        <position position="335"/>
    </location>
    <ligand>
        <name>a 1,2-diacyl-sn-glycero-3-phosphate</name>
        <dbReference type="ChEBI" id="CHEBI:58608"/>
    </ligand>
</feature>
<feature type="binding site" evidence="1">
    <location>
        <position position="374"/>
    </location>
    <ligand>
        <name>Ca(2+)</name>
        <dbReference type="ChEBI" id="CHEBI:29108"/>
    </ligand>
</feature>
<feature type="binding site" evidence="1">
    <location>
        <position position="408"/>
    </location>
    <ligand>
        <name>Ca(2+)</name>
        <dbReference type="ChEBI" id="CHEBI:29108"/>
    </ligand>
</feature>
<feature type="binding site" evidence="1">
    <location>
        <position position="524"/>
    </location>
    <ligand>
        <name>a 1,2-diacyl-sn-glycero-3-phosphate</name>
        <dbReference type="ChEBI" id="CHEBI:58608"/>
    </ligand>
</feature>
<feature type="binding site" evidence="1">
    <location>
        <position position="663"/>
    </location>
    <ligand>
        <name>a 1,2-diacyl-sn-glycero-3-phosphate</name>
        <dbReference type="ChEBI" id="CHEBI:58608"/>
    </ligand>
</feature>
<feature type="binding site" evidence="1">
    <location>
        <position position="724"/>
    </location>
    <ligand>
        <name>Ca(2+)</name>
        <dbReference type="ChEBI" id="CHEBI:29108"/>
    </ligand>
</feature>
<feature type="sequence conflict" description="In Ref. 1 and 2." evidence="4" ref="1 2">
    <original>P</original>
    <variation>S</variation>
    <location>
        <position position="139"/>
    </location>
</feature>
<proteinExistence type="evidence at protein level"/>
<protein>
    <recommendedName>
        <fullName>Phospholipase D alpha 1</fullName>
        <shortName>PLD alpha 1</shortName>
        <ecNumber>3.1.4.4</ecNumber>
    </recommendedName>
    <alternativeName>
        <fullName>Choline phosphatase 1</fullName>
    </alternativeName>
    <alternativeName>
        <fullName>Phosphatidylcholine-hydrolyzing phospholipase D 1</fullName>
    </alternativeName>
</protein>
<name>PLDA1_ORYSJ</name>
<dbReference type="EC" id="3.1.4.4"/>
<dbReference type="EMBL" id="D73411">
    <property type="protein sequence ID" value="BAA11136.1"/>
    <property type="molecule type" value="mRNA"/>
</dbReference>
<dbReference type="EMBL" id="AB001920">
    <property type="protein sequence ID" value="BAA19467.1"/>
    <property type="molecule type" value="Genomic_DNA"/>
</dbReference>
<dbReference type="EMBL" id="AP003215">
    <property type="status" value="NOT_ANNOTATED_CDS"/>
    <property type="molecule type" value="Genomic_DNA"/>
</dbReference>
<dbReference type="EMBL" id="AP003282">
    <property type="status" value="NOT_ANNOTATED_CDS"/>
    <property type="molecule type" value="Genomic_DNA"/>
</dbReference>
<dbReference type="EMBL" id="AP008207">
    <property type="protein sequence ID" value="BAF04067.1"/>
    <property type="molecule type" value="Genomic_DNA"/>
</dbReference>
<dbReference type="EMBL" id="AP014957">
    <property type="protein sequence ID" value="BAS70634.1"/>
    <property type="molecule type" value="Genomic_DNA"/>
</dbReference>
<dbReference type="EMBL" id="CM000138">
    <property type="protein sequence ID" value="EEE53959.1"/>
    <property type="molecule type" value="Genomic_DNA"/>
</dbReference>
<dbReference type="PIR" id="T03402">
    <property type="entry name" value="T03402"/>
</dbReference>
<dbReference type="RefSeq" id="XP_015646609.1">
    <property type="nucleotide sequence ID" value="XM_015791123.1"/>
</dbReference>
<dbReference type="SMR" id="Q43007"/>
<dbReference type="FunCoup" id="Q43007">
    <property type="interactions" value="1830"/>
</dbReference>
<dbReference type="STRING" id="39947.Q43007"/>
<dbReference type="PaxDb" id="39947-Q43007"/>
<dbReference type="EnsemblPlants" id="Os01t0172400-02">
    <property type="protein sequence ID" value="Os01t0172400-02"/>
    <property type="gene ID" value="Os01g0172400"/>
</dbReference>
<dbReference type="EnsemblPlants" id="Os01t0172400-03">
    <property type="protein sequence ID" value="Os01t0172400-03"/>
    <property type="gene ID" value="Os01g0172400"/>
</dbReference>
<dbReference type="Gramene" id="Os01t0172400-02">
    <property type="protein sequence ID" value="Os01t0172400-02"/>
    <property type="gene ID" value="Os01g0172400"/>
</dbReference>
<dbReference type="Gramene" id="Os01t0172400-03">
    <property type="protein sequence ID" value="Os01t0172400-03"/>
    <property type="gene ID" value="Os01g0172400"/>
</dbReference>
<dbReference type="KEGG" id="dosa:Os01g0172400"/>
<dbReference type="eggNOG" id="KOG1329">
    <property type="taxonomic scope" value="Eukaryota"/>
</dbReference>
<dbReference type="InParanoid" id="Q43007"/>
<dbReference type="OMA" id="PNWGRGI"/>
<dbReference type="OrthoDB" id="14911at2759"/>
<dbReference type="PlantReactome" id="R-OSA-1119276">
    <property type="pathway name" value="Choline biosynthesis III"/>
</dbReference>
<dbReference type="Proteomes" id="UP000000763">
    <property type="component" value="Chromosome 1"/>
</dbReference>
<dbReference type="Proteomes" id="UP000007752">
    <property type="component" value="Chromosome 1"/>
</dbReference>
<dbReference type="Proteomes" id="UP000059680">
    <property type="component" value="Chromosome 1"/>
</dbReference>
<dbReference type="ExpressionAtlas" id="Q43007">
    <property type="expression patterns" value="baseline and differential"/>
</dbReference>
<dbReference type="GO" id="GO:0005886">
    <property type="term" value="C:plasma membrane"/>
    <property type="evidence" value="ECO:0000318"/>
    <property type="project" value="GO_Central"/>
</dbReference>
<dbReference type="GO" id="GO:0005509">
    <property type="term" value="F:calcium ion binding"/>
    <property type="evidence" value="ECO:0007669"/>
    <property type="project" value="InterPro"/>
</dbReference>
<dbReference type="GO" id="GO:0004630">
    <property type="term" value="F:phospholipase D activity"/>
    <property type="evidence" value="ECO:0000318"/>
    <property type="project" value="GO_Central"/>
</dbReference>
<dbReference type="GO" id="GO:0046470">
    <property type="term" value="P:phosphatidylcholine metabolic process"/>
    <property type="evidence" value="ECO:0007669"/>
    <property type="project" value="InterPro"/>
</dbReference>
<dbReference type="GO" id="GO:0009395">
    <property type="term" value="P:phospholipid catabolic process"/>
    <property type="evidence" value="ECO:0000318"/>
    <property type="project" value="GO_Central"/>
</dbReference>
<dbReference type="CDD" id="cd04015">
    <property type="entry name" value="C2_plant_PLD"/>
    <property type="match status" value="1"/>
</dbReference>
<dbReference type="FunFam" id="3.30.870.10:FF:000027">
    <property type="entry name" value="Phospholipase D"/>
    <property type="match status" value="1"/>
</dbReference>
<dbReference type="FunFam" id="3.30.870.10:FF:000025">
    <property type="entry name" value="Phospholipase D delta"/>
    <property type="match status" value="1"/>
</dbReference>
<dbReference type="Gene3D" id="2.60.40.150">
    <property type="entry name" value="C2 domain"/>
    <property type="match status" value="1"/>
</dbReference>
<dbReference type="Gene3D" id="3.30.870.10">
    <property type="entry name" value="Endonuclease Chain A"/>
    <property type="match status" value="2"/>
</dbReference>
<dbReference type="InterPro" id="IPR000008">
    <property type="entry name" value="C2_dom"/>
</dbReference>
<dbReference type="InterPro" id="IPR035892">
    <property type="entry name" value="C2_domain_sf"/>
</dbReference>
<dbReference type="InterPro" id="IPR001736">
    <property type="entry name" value="PLipase_D/transphosphatidylase"/>
</dbReference>
<dbReference type="InterPro" id="IPR024632">
    <property type="entry name" value="PLipase_D_C"/>
</dbReference>
<dbReference type="InterPro" id="IPR015679">
    <property type="entry name" value="PLipase_D_fam"/>
</dbReference>
<dbReference type="InterPro" id="IPR011402">
    <property type="entry name" value="PLipase_D_pln"/>
</dbReference>
<dbReference type="PANTHER" id="PTHR18896">
    <property type="entry name" value="PHOSPHOLIPASE D"/>
    <property type="match status" value="1"/>
</dbReference>
<dbReference type="PANTHER" id="PTHR18896:SF115">
    <property type="entry name" value="PHOSPHOLIPASE D ALPHA 1"/>
    <property type="match status" value="1"/>
</dbReference>
<dbReference type="Pfam" id="PF00168">
    <property type="entry name" value="C2"/>
    <property type="match status" value="1"/>
</dbReference>
<dbReference type="Pfam" id="PF12357">
    <property type="entry name" value="PLD_C"/>
    <property type="match status" value="1"/>
</dbReference>
<dbReference type="Pfam" id="PF00614">
    <property type="entry name" value="PLDc"/>
    <property type="match status" value="2"/>
</dbReference>
<dbReference type="PIRSF" id="PIRSF036470">
    <property type="entry name" value="PLD_plant"/>
    <property type="match status" value="1"/>
</dbReference>
<dbReference type="SMART" id="SM00239">
    <property type="entry name" value="C2"/>
    <property type="match status" value="1"/>
</dbReference>
<dbReference type="SMART" id="SM00155">
    <property type="entry name" value="PLDc"/>
    <property type="match status" value="2"/>
</dbReference>
<dbReference type="SUPFAM" id="SSF49562">
    <property type="entry name" value="C2 domain (Calcium/lipid-binding domain, CaLB)"/>
    <property type="match status" value="1"/>
</dbReference>
<dbReference type="SUPFAM" id="SSF56024">
    <property type="entry name" value="Phospholipase D/nuclease"/>
    <property type="match status" value="2"/>
</dbReference>
<dbReference type="PROSITE" id="PS50004">
    <property type="entry name" value="C2"/>
    <property type="match status" value="1"/>
</dbReference>
<dbReference type="PROSITE" id="PS50035">
    <property type="entry name" value="PLD"/>
    <property type="match status" value="2"/>
</dbReference>
<accession>Q43007</accession>
<accession>A0A0P0UZ48</accession>
<accession>Q0JQB1</accession>